<keyword id="KW-0998">Cell outer membrane</keyword>
<keyword id="KW-0406">Ion transport</keyword>
<keyword id="KW-0472">Membrane</keyword>
<keyword id="KW-0626">Porin</keyword>
<keyword id="KW-1185">Reference proteome</keyword>
<keyword id="KW-0732">Signal</keyword>
<keyword id="KW-0762">Sugar transport</keyword>
<keyword id="KW-0812">Transmembrane</keyword>
<keyword id="KW-1134">Transmembrane beta strand</keyword>
<keyword id="KW-0813">Transport</keyword>
<accession>Q8X8F2</accession>
<accession>Q7A9C2</accession>
<evidence type="ECO:0000250" key="1"/>
<evidence type="ECO:0000305" key="2"/>
<proteinExistence type="inferred from homology"/>
<comment type="function">
    <text evidence="1">Outer membrane channel protein that allows an efficient diffusion of low-molecular-weight solutes such as small sugars and tetraglycine. However, the specific substrate recognized by the OmpL channel is unknown (By similarity).</text>
</comment>
<comment type="subcellular location">
    <subcellularLocation>
        <location evidence="1">Cell outer membrane</location>
        <topology evidence="1">Multi-pass membrane protein</topology>
    </subcellularLocation>
</comment>
<comment type="similarity">
    <text evidence="2">Belongs to the oligogalacturonate-specific porin KdgM (TC 1.B.35) family. OmpL subfamily.</text>
</comment>
<comment type="sequence caution" evidence="2">
    <conflict type="erroneous initiation">
        <sequence resource="EMBL-CDS" id="AAG59064"/>
    </conflict>
</comment>
<comment type="sequence caution" evidence="2">
    <conflict type="erroneous initiation">
        <sequence resource="EMBL-CDS" id="BAB38220"/>
    </conflict>
</comment>
<organism>
    <name type="scientific">Escherichia coli O157:H7</name>
    <dbReference type="NCBI Taxonomy" id="83334"/>
    <lineage>
        <taxon>Bacteria</taxon>
        <taxon>Pseudomonadati</taxon>
        <taxon>Pseudomonadota</taxon>
        <taxon>Gammaproteobacteria</taxon>
        <taxon>Enterobacterales</taxon>
        <taxon>Enterobacteriaceae</taxon>
        <taxon>Escherichia</taxon>
    </lineage>
</organism>
<feature type="signal peptide" evidence="1">
    <location>
        <begin position="1"/>
        <end position="20"/>
    </location>
</feature>
<feature type="chain" id="PRO_0000016606" description="Porin OmpL">
    <location>
        <begin position="21"/>
        <end position="230"/>
    </location>
</feature>
<reference key="1">
    <citation type="journal article" date="2001" name="Nature">
        <title>Genome sequence of enterohaemorrhagic Escherichia coli O157:H7.</title>
        <authorList>
            <person name="Perna N.T."/>
            <person name="Plunkett G. III"/>
            <person name="Burland V."/>
            <person name="Mau B."/>
            <person name="Glasner J.D."/>
            <person name="Rose D.J."/>
            <person name="Mayhew G.F."/>
            <person name="Evans P.S."/>
            <person name="Gregor J."/>
            <person name="Kirkpatrick H.A."/>
            <person name="Posfai G."/>
            <person name="Hackett J."/>
            <person name="Klink S."/>
            <person name="Boutin A."/>
            <person name="Shao Y."/>
            <person name="Miller L."/>
            <person name="Grotbeck E.J."/>
            <person name="Davis N.W."/>
            <person name="Lim A."/>
            <person name="Dimalanta E.T."/>
            <person name="Potamousis K."/>
            <person name="Apodaca J."/>
            <person name="Anantharaman T.S."/>
            <person name="Lin J."/>
            <person name="Yen G."/>
            <person name="Schwartz D.C."/>
            <person name="Welch R.A."/>
            <person name="Blattner F.R."/>
        </authorList>
    </citation>
    <scope>NUCLEOTIDE SEQUENCE [LARGE SCALE GENOMIC DNA]</scope>
    <source>
        <strain>O157:H7 / EDL933 / ATCC 700927 / EHEC</strain>
    </source>
</reference>
<reference key="2">
    <citation type="journal article" date="2001" name="DNA Res.">
        <title>Complete genome sequence of enterohemorrhagic Escherichia coli O157:H7 and genomic comparison with a laboratory strain K-12.</title>
        <authorList>
            <person name="Hayashi T."/>
            <person name="Makino K."/>
            <person name="Ohnishi M."/>
            <person name="Kurokawa K."/>
            <person name="Ishii K."/>
            <person name="Yokoyama K."/>
            <person name="Han C.-G."/>
            <person name="Ohtsubo E."/>
            <person name="Nakayama K."/>
            <person name="Murata T."/>
            <person name="Tanaka M."/>
            <person name="Tobe T."/>
            <person name="Iida T."/>
            <person name="Takami H."/>
            <person name="Honda T."/>
            <person name="Sasakawa C."/>
            <person name="Ogasawara N."/>
            <person name="Yasunaga T."/>
            <person name="Kuhara S."/>
            <person name="Shiba T."/>
            <person name="Hattori M."/>
            <person name="Shinagawa H."/>
        </authorList>
    </citation>
    <scope>NUCLEOTIDE SEQUENCE [LARGE SCALE GENOMIC DNA]</scope>
    <source>
        <strain>O157:H7 / Sakai / RIMD 0509952 / EHEC</strain>
    </source>
</reference>
<protein>
    <recommendedName>
        <fullName>Porin OmpL</fullName>
    </recommendedName>
</protein>
<name>OMPL_ECO57</name>
<gene>
    <name type="primary">ompL</name>
    <name type="ordered locus">Z5411</name>
    <name type="ordered locus">ECs4797</name>
</gene>
<sequence length="230" mass="27082">MKNINAIILLSSLTSASVFAGAYVENREAYNLASDQGEVMLRVGYNFDMGAGIMLTNTYTFQREDELKHGYNEIEGWYPLFKPTDKLTIQPGGLINDKSIGSGGAVYLDVNYKFTPWFNLTVRNRFNHNNYSSTDLNGDLDNNDSYEIGNYWNFIITDKFSYTFEPHYFYNINDFNSGNGTKHHWEITNTFRYRINEHWLPYIELRWLDRNVEPYHREQNQIRIGTKYFF</sequence>
<dbReference type="EMBL" id="AE005174">
    <property type="protein sequence ID" value="AAG59064.1"/>
    <property type="status" value="ALT_INIT"/>
    <property type="molecule type" value="Genomic_DNA"/>
</dbReference>
<dbReference type="EMBL" id="BA000007">
    <property type="protein sequence ID" value="BAB38220.1"/>
    <property type="status" value="ALT_INIT"/>
    <property type="molecule type" value="Genomic_DNA"/>
</dbReference>
<dbReference type="PIR" id="D86075">
    <property type="entry name" value="D86075"/>
</dbReference>
<dbReference type="PIR" id="E91228">
    <property type="entry name" value="E91228"/>
</dbReference>
<dbReference type="RefSeq" id="NP_312824.2">
    <property type="nucleotide sequence ID" value="NC_002695.1"/>
</dbReference>
<dbReference type="RefSeq" id="WP_001301704.1">
    <property type="nucleotide sequence ID" value="NZ_VOAI01000016.1"/>
</dbReference>
<dbReference type="SMR" id="Q8X8F2"/>
<dbReference type="STRING" id="155864.Z5411"/>
<dbReference type="GeneID" id="915088"/>
<dbReference type="KEGG" id="ece:Z5411"/>
<dbReference type="KEGG" id="ecs:ECs_4797"/>
<dbReference type="PATRIC" id="fig|386585.9.peg.5012"/>
<dbReference type="eggNOG" id="COG1452">
    <property type="taxonomic scope" value="Bacteria"/>
</dbReference>
<dbReference type="HOGENOM" id="CLU_103714_0_0_6"/>
<dbReference type="OMA" id="DTHEFAN"/>
<dbReference type="Proteomes" id="UP000000558">
    <property type="component" value="Chromosome"/>
</dbReference>
<dbReference type="Proteomes" id="UP000002519">
    <property type="component" value="Chromosome"/>
</dbReference>
<dbReference type="GO" id="GO:0009279">
    <property type="term" value="C:cell outer membrane"/>
    <property type="evidence" value="ECO:0007669"/>
    <property type="project" value="UniProtKB-SubCell"/>
</dbReference>
<dbReference type="GO" id="GO:0046930">
    <property type="term" value="C:pore complex"/>
    <property type="evidence" value="ECO:0007669"/>
    <property type="project" value="UniProtKB-KW"/>
</dbReference>
<dbReference type="GO" id="GO:0015288">
    <property type="term" value="F:porin activity"/>
    <property type="evidence" value="ECO:0007669"/>
    <property type="project" value="UniProtKB-KW"/>
</dbReference>
<dbReference type="GO" id="GO:0006811">
    <property type="term" value="P:monoatomic ion transport"/>
    <property type="evidence" value="ECO:0007669"/>
    <property type="project" value="UniProtKB-KW"/>
</dbReference>
<dbReference type="GO" id="GO:0015772">
    <property type="term" value="P:oligosaccharide transport"/>
    <property type="evidence" value="ECO:0007669"/>
    <property type="project" value="TreeGrafter"/>
</dbReference>
<dbReference type="FunFam" id="2.40.160.40:FF:000001">
    <property type="entry name" value="Porin OmpL"/>
    <property type="match status" value="1"/>
</dbReference>
<dbReference type="Gene3D" id="2.40.160.40">
    <property type="entry name" value="monomeric porin ompg"/>
    <property type="match status" value="1"/>
</dbReference>
<dbReference type="InterPro" id="IPR053713">
    <property type="entry name" value="Bact_OM_Channel_sf"/>
</dbReference>
<dbReference type="InterPro" id="IPR009331">
    <property type="entry name" value="Oligogalacturonate-sp_porin"/>
</dbReference>
<dbReference type="NCBIfam" id="NF007434">
    <property type="entry name" value="PRK09980.1"/>
    <property type="match status" value="1"/>
</dbReference>
<dbReference type="PANTHER" id="PTHR38105:SF2">
    <property type="entry name" value="N-ACETYLNEURAMINIC ACID OUTER MEMBRANE CHANNEL PROTEIN NANC-RELATED"/>
    <property type="match status" value="1"/>
</dbReference>
<dbReference type="PANTHER" id="PTHR38105">
    <property type="entry name" value="OUTER MEMBRANE PROTEIN-RELATED-RELATED"/>
    <property type="match status" value="1"/>
</dbReference>
<dbReference type="Pfam" id="PF06178">
    <property type="entry name" value="KdgM"/>
    <property type="match status" value="1"/>
</dbReference>